<evidence type="ECO:0000255" key="1">
    <source>
        <dbReference type="HAMAP-Rule" id="MF_00268"/>
    </source>
</evidence>
<name>RECA_SHEON</name>
<accession>Q8EBS0</accession>
<protein>
    <recommendedName>
        <fullName evidence="1">Protein RecA</fullName>
    </recommendedName>
    <alternativeName>
        <fullName evidence="1">Recombinase A</fullName>
    </alternativeName>
</protein>
<sequence>MKVDPNKEKALAAVLSQIEKQFGKGSIMKLGEDRSMDVETISTGSLSLDVALGAGGLPMGRIVEIYGPESSGKTTLTLEVIAAAQREGKTCAFIDAEHALDPIYAKKLGVDIDNLLCSQPDTGEQALEICDALTRSGAVDVIIVDSVAALTPKAEIEGEIGDSHMGLAARMMSQAMRKLAGNLKQSNTLLIFINQIRMKIGVMFGNPETTTGGNALKFYASVRLDIRRTGAIKEGDEVVGNETRVKVVKNKVAAPFKQAEFQILYGQGINRTGELVDLGVAHKLIEKAGAWYSYKGDKIGQGRANAGKYLTENPAIAAEIDKTLRELLLSNPSALASSASDDDNVEGNIDLETGEVF</sequence>
<organism>
    <name type="scientific">Shewanella oneidensis (strain ATCC 700550 / JCM 31522 / CIP 106686 / LMG 19005 / NCIMB 14063 / MR-1)</name>
    <dbReference type="NCBI Taxonomy" id="211586"/>
    <lineage>
        <taxon>Bacteria</taxon>
        <taxon>Pseudomonadati</taxon>
        <taxon>Pseudomonadota</taxon>
        <taxon>Gammaproteobacteria</taxon>
        <taxon>Alteromonadales</taxon>
        <taxon>Shewanellaceae</taxon>
        <taxon>Shewanella</taxon>
    </lineage>
</organism>
<reference key="1">
    <citation type="journal article" date="2002" name="Nat. Biotechnol.">
        <title>Genome sequence of the dissimilatory metal ion-reducing bacterium Shewanella oneidensis.</title>
        <authorList>
            <person name="Heidelberg J.F."/>
            <person name="Paulsen I.T."/>
            <person name="Nelson K.E."/>
            <person name="Gaidos E.J."/>
            <person name="Nelson W.C."/>
            <person name="Read T.D."/>
            <person name="Eisen J.A."/>
            <person name="Seshadri R."/>
            <person name="Ward N.L."/>
            <person name="Methe B.A."/>
            <person name="Clayton R.A."/>
            <person name="Meyer T."/>
            <person name="Tsapin A."/>
            <person name="Scott J."/>
            <person name="Beanan M.J."/>
            <person name="Brinkac L.M."/>
            <person name="Daugherty S.C."/>
            <person name="DeBoy R.T."/>
            <person name="Dodson R.J."/>
            <person name="Durkin A.S."/>
            <person name="Haft D.H."/>
            <person name="Kolonay J.F."/>
            <person name="Madupu R."/>
            <person name="Peterson J.D."/>
            <person name="Umayam L.A."/>
            <person name="White O."/>
            <person name="Wolf A.M."/>
            <person name="Vamathevan J.J."/>
            <person name="Weidman J.F."/>
            <person name="Impraim M."/>
            <person name="Lee K."/>
            <person name="Berry K.J."/>
            <person name="Lee C."/>
            <person name="Mueller J."/>
            <person name="Khouri H.M."/>
            <person name="Gill J."/>
            <person name="Utterback T.R."/>
            <person name="McDonald L.A."/>
            <person name="Feldblyum T.V."/>
            <person name="Smith H.O."/>
            <person name="Venter J.C."/>
            <person name="Nealson K.H."/>
            <person name="Fraser C.M."/>
        </authorList>
    </citation>
    <scope>NUCLEOTIDE SEQUENCE [LARGE SCALE GENOMIC DNA]</scope>
    <source>
        <strain>ATCC 700550 / JCM 31522 / CIP 106686 / LMG 19005 / NCIMB 14063 / MR-1</strain>
    </source>
</reference>
<keyword id="KW-0067">ATP-binding</keyword>
<keyword id="KW-0963">Cytoplasm</keyword>
<keyword id="KW-0227">DNA damage</keyword>
<keyword id="KW-0233">DNA recombination</keyword>
<keyword id="KW-0234">DNA repair</keyword>
<keyword id="KW-0238">DNA-binding</keyword>
<keyword id="KW-0547">Nucleotide-binding</keyword>
<keyword id="KW-1185">Reference proteome</keyword>
<keyword id="KW-0742">SOS response</keyword>
<comment type="function">
    <text evidence="1">Can catalyze the hydrolysis of ATP in the presence of single-stranded DNA, the ATP-dependent uptake of single-stranded DNA by duplex DNA, and the ATP-dependent hybridization of homologous single-stranded DNAs. It interacts with LexA causing its activation and leading to its autocatalytic cleavage.</text>
</comment>
<comment type="subcellular location">
    <subcellularLocation>
        <location evidence="1">Cytoplasm</location>
    </subcellularLocation>
</comment>
<comment type="similarity">
    <text evidence="1">Belongs to the RecA family.</text>
</comment>
<dbReference type="EMBL" id="AE014299">
    <property type="protein sequence ID" value="AAN56427.1"/>
    <property type="molecule type" value="Genomic_DNA"/>
</dbReference>
<dbReference type="RefSeq" id="NP_718983.1">
    <property type="nucleotide sequence ID" value="NC_004347.2"/>
</dbReference>
<dbReference type="RefSeq" id="WP_011073286.1">
    <property type="nucleotide sequence ID" value="NZ_CP053946.1"/>
</dbReference>
<dbReference type="SMR" id="Q8EBS0"/>
<dbReference type="STRING" id="211586.SO_3430"/>
<dbReference type="PaxDb" id="211586-SO_3430"/>
<dbReference type="KEGG" id="son:SO_3430"/>
<dbReference type="PATRIC" id="fig|211586.12.peg.3325"/>
<dbReference type="eggNOG" id="COG0468">
    <property type="taxonomic scope" value="Bacteria"/>
</dbReference>
<dbReference type="HOGENOM" id="CLU_040469_3_2_6"/>
<dbReference type="OrthoDB" id="9776733at2"/>
<dbReference type="PhylomeDB" id="Q8EBS0"/>
<dbReference type="BioCyc" id="SONE211586:G1GMP-3201-MONOMER"/>
<dbReference type="Proteomes" id="UP000008186">
    <property type="component" value="Chromosome"/>
</dbReference>
<dbReference type="GO" id="GO:0005737">
    <property type="term" value="C:cytoplasm"/>
    <property type="evidence" value="ECO:0007669"/>
    <property type="project" value="UniProtKB-SubCell"/>
</dbReference>
<dbReference type="GO" id="GO:0005524">
    <property type="term" value="F:ATP binding"/>
    <property type="evidence" value="ECO:0007669"/>
    <property type="project" value="UniProtKB-UniRule"/>
</dbReference>
<dbReference type="GO" id="GO:0016887">
    <property type="term" value="F:ATP hydrolysis activity"/>
    <property type="evidence" value="ECO:0007669"/>
    <property type="project" value="InterPro"/>
</dbReference>
<dbReference type="GO" id="GO:0140664">
    <property type="term" value="F:ATP-dependent DNA damage sensor activity"/>
    <property type="evidence" value="ECO:0007669"/>
    <property type="project" value="InterPro"/>
</dbReference>
<dbReference type="GO" id="GO:0003684">
    <property type="term" value="F:damaged DNA binding"/>
    <property type="evidence" value="ECO:0007669"/>
    <property type="project" value="UniProtKB-UniRule"/>
</dbReference>
<dbReference type="GO" id="GO:0003697">
    <property type="term" value="F:single-stranded DNA binding"/>
    <property type="evidence" value="ECO:0007669"/>
    <property type="project" value="UniProtKB-UniRule"/>
</dbReference>
<dbReference type="GO" id="GO:0006310">
    <property type="term" value="P:DNA recombination"/>
    <property type="evidence" value="ECO:0007669"/>
    <property type="project" value="UniProtKB-UniRule"/>
</dbReference>
<dbReference type="GO" id="GO:0006281">
    <property type="term" value="P:DNA repair"/>
    <property type="evidence" value="ECO:0007669"/>
    <property type="project" value="UniProtKB-UniRule"/>
</dbReference>
<dbReference type="GO" id="GO:0009432">
    <property type="term" value="P:SOS response"/>
    <property type="evidence" value="ECO:0007669"/>
    <property type="project" value="UniProtKB-UniRule"/>
</dbReference>
<dbReference type="CDD" id="cd00983">
    <property type="entry name" value="RecA"/>
    <property type="match status" value="1"/>
</dbReference>
<dbReference type="FunFam" id="3.40.50.300:FF:000087">
    <property type="entry name" value="Recombinase RecA"/>
    <property type="match status" value="1"/>
</dbReference>
<dbReference type="Gene3D" id="3.40.50.300">
    <property type="entry name" value="P-loop containing nucleotide triphosphate hydrolases"/>
    <property type="match status" value="1"/>
</dbReference>
<dbReference type="HAMAP" id="MF_00268">
    <property type="entry name" value="RecA"/>
    <property type="match status" value="1"/>
</dbReference>
<dbReference type="InterPro" id="IPR003593">
    <property type="entry name" value="AAA+_ATPase"/>
</dbReference>
<dbReference type="InterPro" id="IPR013765">
    <property type="entry name" value="DNA_recomb/repair_RecA"/>
</dbReference>
<dbReference type="InterPro" id="IPR020584">
    <property type="entry name" value="DNA_recomb/repair_RecA_CS"/>
</dbReference>
<dbReference type="InterPro" id="IPR027417">
    <property type="entry name" value="P-loop_NTPase"/>
</dbReference>
<dbReference type="InterPro" id="IPR049261">
    <property type="entry name" value="RecA-like_C"/>
</dbReference>
<dbReference type="InterPro" id="IPR049428">
    <property type="entry name" value="RecA-like_N"/>
</dbReference>
<dbReference type="InterPro" id="IPR020588">
    <property type="entry name" value="RecA_ATP-bd"/>
</dbReference>
<dbReference type="InterPro" id="IPR023400">
    <property type="entry name" value="RecA_C_sf"/>
</dbReference>
<dbReference type="InterPro" id="IPR020587">
    <property type="entry name" value="RecA_monomer-monomer_interface"/>
</dbReference>
<dbReference type="NCBIfam" id="TIGR02012">
    <property type="entry name" value="tigrfam_recA"/>
    <property type="match status" value="1"/>
</dbReference>
<dbReference type="PANTHER" id="PTHR45900:SF1">
    <property type="entry name" value="MITOCHONDRIAL DNA REPAIR PROTEIN RECA HOMOLOG-RELATED"/>
    <property type="match status" value="1"/>
</dbReference>
<dbReference type="PANTHER" id="PTHR45900">
    <property type="entry name" value="RECA"/>
    <property type="match status" value="1"/>
</dbReference>
<dbReference type="Pfam" id="PF00154">
    <property type="entry name" value="RecA"/>
    <property type="match status" value="1"/>
</dbReference>
<dbReference type="Pfam" id="PF21096">
    <property type="entry name" value="RecA_C"/>
    <property type="match status" value="1"/>
</dbReference>
<dbReference type="PRINTS" id="PR00142">
    <property type="entry name" value="RECA"/>
</dbReference>
<dbReference type="SMART" id="SM00382">
    <property type="entry name" value="AAA"/>
    <property type="match status" value="1"/>
</dbReference>
<dbReference type="SUPFAM" id="SSF52540">
    <property type="entry name" value="P-loop containing nucleoside triphosphate hydrolases"/>
    <property type="match status" value="1"/>
</dbReference>
<dbReference type="SUPFAM" id="SSF54752">
    <property type="entry name" value="RecA protein, C-terminal domain"/>
    <property type="match status" value="1"/>
</dbReference>
<dbReference type="PROSITE" id="PS00321">
    <property type="entry name" value="RECA_1"/>
    <property type="match status" value="1"/>
</dbReference>
<dbReference type="PROSITE" id="PS50162">
    <property type="entry name" value="RECA_2"/>
    <property type="match status" value="1"/>
</dbReference>
<dbReference type="PROSITE" id="PS50163">
    <property type="entry name" value="RECA_3"/>
    <property type="match status" value="1"/>
</dbReference>
<proteinExistence type="inferred from homology"/>
<gene>
    <name evidence="1" type="primary">recA</name>
    <name type="ordered locus">SO_3430</name>
</gene>
<feature type="chain" id="PRO_0000122831" description="Protein RecA">
    <location>
        <begin position="1"/>
        <end position="357"/>
    </location>
</feature>
<feature type="binding site" evidence="1">
    <location>
        <begin position="67"/>
        <end position="74"/>
    </location>
    <ligand>
        <name>ATP</name>
        <dbReference type="ChEBI" id="CHEBI:30616"/>
    </ligand>
</feature>